<organism>
    <name type="scientific">Chromohalobacter salexigens (strain ATCC BAA-138 / DSM 3043 / CIP 106854 / NCIMB 13768 / 1H11)</name>
    <dbReference type="NCBI Taxonomy" id="290398"/>
    <lineage>
        <taxon>Bacteria</taxon>
        <taxon>Pseudomonadati</taxon>
        <taxon>Pseudomonadota</taxon>
        <taxon>Gammaproteobacteria</taxon>
        <taxon>Oceanospirillales</taxon>
        <taxon>Halomonadaceae</taxon>
        <taxon>Chromohalobacter</taxon>
    </lineage>
</organism>
<dbReference type="EMBL" id="CP000285">
    <property type="protein sequence ID" value="ABE58869.1"/>
    <property type="status" value="ALT_INIT"/>
    <property type="molecule type" value="Genomic_DNA"/>
</dbReference>
<dbReference type="RefSeq" id="WP_179152067.1">
    <property type="nucleotide sequence ID" value="NC_007963.1"/>
</dbReference>
<dbReference type="SMR" id="Q1QXD9"/>
<dbReference type="STRING" id="290398.Csal_1516"/>
<dbReference type="GeneID" id="95334242"/>
<dbReference type="KEGG" id="csa:Csal_1516"/>
<dbReference type="eggNOG" id="COG1309">
    <property type="taxonomic scope" value="Bacteria"/>
</dbReference>
<dbReference type="HOGENOM" id="CLU_069356_15_4_6"/>
<dbReference type="UniPathway" id="UPA00529"/>
<dbReference type="Proteomes" id="UP000000239">
    <property type="component" value="Chromosome"/>
</dbReference>
<dbReference type="GO" id="GO:0003700">
    <property type="term" value="F:DNA-binding transcription factor activity"/>
    <property type="evidence" value="ECO:0007669"/>
    <property type="project" value="UniProtKB-UniRule"/>
</dbReference>
<dbReference type="GO" id="GO:0000976">
    <property type="term" value="F:transcription cis-regulatory region binding"/>
    <property type="evidence" value="ECO:0007669"/>
    <property type="project" value="TreeGrafter"/>
</dbReference>
<dbReference type="GO" id="GO:0019285">
    <property type="term" value="P:glycine betaine biosynthetic process from choline"/>
    <property type="evidence" value="ECO:0007669"/>
    <property type="project" value="UniProtKB-UniRule"/>
</dbReference>
<dbReference type="GO" id="GO:0045892">
    <property type="term" value="P:negative regulation of DNA-templated transcription"/>
    <property type="evidence" value="ECO:0007669"/>
    <property type="project" value="UniProtKB-UniRule"/>
</dbReference>
<dbReference type="Gene3D" id="1.10.357.10">
    <property type="entry name" value="Tetracycline Repressor, domain 2"/>
    <property type="match status" value="1"/>
</dbReference>
<dbReference type="HAMAP" id="MF_00768">
    <property type="entry name" value="HTH_type_BetI"/>
    <property type="match status" value="1"/>
</dbReference>
<dbReference type="InterPro" id="IPR039538">
    <property type="entry name" value="BetI_C"/>
</dbReference>
<dbReference type="InterPro" id="IPR023772">
    <property type="entry name" value="DNA-bd_HTH_TetR-type_CS"/>
</dbReference>
<dbReference type="InterPro" id="IPR009057">
    <property type="entry name" value="Homeodomain-like_sf"/>
</dbReference>
<dbReference type="InterPro" id="IPR050109">
    <property type="entry name" value="HTH-type_TetR-like_transc_reg"/>
</dbReference>
<dbReference type="InterPro" id="IPR001647">
    <property type="entry name" value="HTH_TetR"/>
</dbReference>
<dbReference type="InterPro" id="IPR036271">
    <property type="entry name" value="Tet_transcr_reg_TetR-rel_C_sf"/>
</dbReference>
<dbReference type="InterPro" id="IPR017757">
    <property type="entry name" value="Tscrpt_rep_BetI"/>
</dbReference>
<dbReference type="NCBIfam" id="TIGR03384">
    <property type="entry name" value="betaine_BetI"/>
    <property type="match status" value="1"/>
</dbReference>
<dbReference type="NCBIfam" id="NF001978">
    <property type="entry name" value="PRK00767.1"/>
    <property type="match status" value="1"/>
</dbReference>
<dbReference type="PANTHER" id="PTHR30055:SF234">
    <property type="entry name" value="HTH-TYPE TRANSCRIPTIONAL REGULATOR BETI"/>
    <property type="match status" value="1"/>
</dbReference>
<dbReference type="PANTHER" id="PTHR30055">
    <property type="entry name" value="HTH-TYPE TRANSCRIPTIONAL REGULATOR RUTR"/>
    <property type="match status" value="1"/>
</dbReference>
<dbReference type="Pfam" id="PF13977">
    <property type="entry name" value="TetR_C_6"/>
    <property type="match status" value="1"/>
</dbReference>
<dbReference type="Pfam" id="PF00440">
    <property type="entry name" value="TetR_N"/>
    <property type="match status" value="1"/>
</dbReference>
<dbReference type="PRINTS" id="PR00455">
    <property type="entry name" value="HTHTETR"/>
</dbReference>
<dbReference type="SUPFAM" id="SSF46689">
    <property type="entry name" value="Homeodomain-like"/>
    <property type="match status" value="1"/>
</dbReference>
<dbReference type="SUPFAM" id="SSF48498">
    <property type="entry name" value="Tetracyclin repressor-like, C-terminal domain"/>
    <property type="match status" value="1"/>
</dbReference>
<dbReference type="PROSITE" id="PS01081">
    <property type="entry name" value="HTH_TETR_1"/>
    <property type="match status" value="1"/>
</dbReference>
<dbReference type="PROSITE" id="PS50977">
    <property type="entry name" value="HTH_TETR_2"/>
    <property type="match status" value="1"/>
</dbReference>
<accession>Q1QXD9</accession>
<sequence length="202" mass="22805">MPKLGMQPIRRRQLIQATLETIDDVGLADATIARIAKRAGVSAGIISHYFGGKDGLLESAMRQILWDLGDAVARRRAQGVESPREHIRAIIDGNFDRSQVNKTVMKTWLAFWSVSMHRPDLQRLQRVNDRWLYSNLCHHFRRCLPRPEAQQAARGLAAMIDGLWLRGALAPQGIDVDRARQLAYDYVEEQLARSTSHAPTDA</sequence>
<proteinExistence type="inferred from homology"/>
<gene>
    <name evidence="2" type="primary">betI1</name>
    <name type="synonym">betI</name>
    <name type="ordered locus">Csal_1516</name>
</gene>
<feature type="chain" id="PRO_0000245317" description="HTH-type transcriptional regulator BetI 1">
    <location>
        <begin position="1"/>
        <end position="202"/>
    </location>
</feature>
<feature type="domain" description="HTH tetR-type" evidence="2">
    <location>
        <begin position="8"/>
        <end position="68"/>
    </location>
</feature>
<feature type="DNA-binding region" description="H-T-H motif" evidence="2">
    <location>
        <begin position="31"/>
        <end position="50"/>
    </location>
</feature>
<keyword id="KW-0238">DNA-binding</keyword>
<keyword id="KW-1185">Reference proteome</keyword>
<keyword id="KW-0678">Repressor</keyword>
<keyword id="KW-0804">Transcription</keyword>
<keyword id="KW-0805">Transcription regulation</keyword>
<reference key="1">
    <citation type="journal article" date="2011" name="Stand. Genomic Sci.">
        <title>Complete genome sequence of the halophilic and highly halotolerant Chromohalobacter salexigens type strain (1H11(T)).</title>
        <authorList>
            <person name="Copeland A."/>
            <person name="O'Connor K."/>
            <person name="Lucas S."/>
            <person name="Lapidus A."/>
            <person name="Berry K.W."/>
            <person name="Detter J.C."/>
            <person name="Del Rio T.G."/>
            <person name="Hammon N."/>
            <person name="Dalin E."/>
            <person name="Tice H."/>
            <person name="Pitluck S."/>
            <person name="Bruce D."/>
            <person name="Goodwin L."/>
            <person name="Han C."/>
            <person name="Tapia R."/>
            <person name="Saunders E."/>
            <person name="Schmutz J."/>
            <person name="Brettin T."/>
            <person name="Larimer F."/>
            <person name="Land M."/>
            <person name="Hauser L."/>
            <person name="Vargas C."/>
            <person name="Nieto J.J."/>
            <person name="Kyrpides N.C."/>
            <person name="Ivanova N."/>
            <person name="Goker M."/>
            <person name="Klenk H.P."/>
            <person name="Csonka L.N."/>
            <person name="Woyke T."/>
        </authorList>
    </citation>
    <scope>NUCLEOTIDE SEQUENCE [LARGE SCALE GENOMIC DNA]</scope>
    <source>
        <strain>ATCC BAA-138 / DSM 3043 / CIP 106854 / NCIMB 13768 / 1H11</strain>
    </source>
</reference>
<name>BETI1_CHRSD</name>
<comment type="function">
    <text evidence="1">Repressor involved in the biosynthesis of the osmoprotectant glycine betaine. It represses transcription of the choline transporter BetT and the genes of BetAB involved in the synthesis of glycine betaine (By similarity).</text>
</comment>
<comment type="pathway">
    <text>Amine and polyamine biosynthesis; betaine biosynthesis via choline pathway [regulation].</text>
</comment>
<comment type="sequence caution" evidence="3">
    <conflict type="erroneous initiation">
        <sequence resource="EMBL-CDS" id="ABE58869"/>
    </conflict>
    <text>Truncated N-terminus.</text>
</comment>
<protein>
    <recommendedName>
        <fullName evidence="2">HTH-type transcriptional regulator BetI 1</fullName>
    </recommendedName>
</protein>
<evidence type="ECO:0000250" key="1"/>
<evidence type="ECO:0000255" key="2">
    <source>
        <dbReference type="HAMAP-Rule" id="MF_00768"/>
    </source>
</evidence>
<evidence type="ECO:0000305" key="3"/>